<organism>
    <name type="scientific">Gallus gallus</name>
    <name type="common">Chicken</name>
    <dbReference type="NCBI Taxonomy" id="9031"/>
    <lineage>
        <taxon>Eukaryota</taxon>
        <taxon>Metazoa</taxon>
        <taxon>Chordata</taxon>
        <taxon>Craniata</taxon>
        <taxon>Vertebrata</taxon>
        <taxon>Euteleostomi</taxon>
        <taxon>Archelosauria</taxon>
        <taxon>Archosauria</taxon>
        <taxon>Dinosauria</taxon>
        <taxon>Saurischia</taxon>
        <taxon>Theropoda</taxon>
        <taxon>Coelurosauria</taxon>
        <taxon>Aves</taxon>
        <taxon>Neognathae</taxon>
        <taxon>Galloanserae</taxon>
        <taxon>Galliformes</taxon>
        <taxon>Phasianidae</taxon>
        <taxon>Phasianinae</taxon>
        <taxon>Gallus</taxon>
    </lineage>
</organism>
<protein>
    <recommendedName>
        <fullName>Endoplasmin</fullName>
        <ecNumber evidence="3">3.6.4.-</ecNumber>
    </recommendedName>
    <alternativeName>
        <fullName>Heat shock 108 kDa protein</fullName>
        <shortName>HSP 108</shortName>
        <shortName>HSP108</shortName>
    </alternativeName>
    <alternativeName>
        <fullName>Heat shock protein 90 kDa beta member 1</fullName>
    </alternativeName>
    <alternativeName>
        <fullName>Transferrin-binding protein</fullName>
    </alternativeName>
</protein>
<accession>P08110</accession>
<accession>Q90869</accession>
<accession>Q90870</accession>
<proteinExistence type="evidence at protein level"/>
<feature type="signal peptide" evidence="4">
    <location>
        <begin position="1"/>
        <end position="21"/>
    </location>
</feature>
<feature type="chain" id="PRO_0000013601" description="Endoplasmin">
    <location>
        <begin position="22"/>
        <end position="795"/>
    </location>
</feature>
<feature type="region of interest" description="Disordered" evidence="5">
    <location>
        <begin position="289"/>
        <end position="322"/>
    </location>
</feature>
<feature type="region of interest" description="Disordered" evidence="5">
    <location>
        <begin position="751"/>
        <end position="795"/>
    </location>
</feature>
<feature type="short sequence motif" description="SRT pseudosubstrate motif" evidence="2">
    <location>
        <begin position="41"/>
        <end position="43"/>
    </location>
</feature>
<feature type="short sequence motif" description="Prevents secretion from ER">
    <location>
        <begin position="792"/>
        <end position="795"/>
    </location>
</feature>
<feature type="compositionally biased region" description="Acidic residues" evidence="5">
    <location>
        <begin position="289"/>
        <end position="316"/>
    </location>
</feature>
<feature type="compositionally biased region" description="Acidic residues" evidence="5">
    <location>
        <begin position="756"/>
        <end position="782"/>
    </location>
</feature>
<feature type="compositionally biased region" description="Basic and acidic residues" evidence="5">
    <location>
        <begin position="783"/>
        <end position="795"/>
    </location>
</feature>
<feature type="binding site" evidence="3">
    <location>
        <position position="106"/>
    </location>
    <ligand>
        <name>ATP</name>
        <dbReference type="ChEBI" id="CHEBI:30616"/>
    </ligand>
</feature>
<feature type="binding site" evidence="3">
    <location>
        <position position="148"/>
    </location>
    <ligand>
        <name>ATP</name>
        <dbReference type="ChEBI" id="CHEBI:30616"/>
    </ligand>
</feature>
<feature type="binding site" evidence="3">
    <location>
        <position position="161"/>
    </location>
    <ligand>
        <name>ATP</name>
        <dbReference type="ChEBI" id="CHEBI:30616"/>
    </ligand>
</feature>
<feature type="binding site" evidence="3">
    <location>
        <position position="198"/>
    </location>
    <ligand>
        <name>ATP</name>
        <dbReference type="ChEBI" id="CHEBI:30616"/>
    </ligand>
</feature>
<feature type="site" description="Important for ATP hydrolysis" evidence="3">
    <location>
        <position position="447"/>
    </location>
</feature>
<feature type="glycosylation site" description="N-linked (GlcNAc...) asparagine" evidence="4">
    <location>
        <position position="61"/>
    </location>
</feature>
<feature type="glycosylation site" description="N-linked (GlcNAc...) asparagine" evidence="4">
    <location>
        <position position="106"/>
    </location>
</feature>
<feature type="glycosylation site" description="N-linked (GlcNAc...) asparagine" evidence="6">
    <location>
        <position position="216"/>
    </location>
</feature>
<feature type="glycosylation site" description="N-linked (GlcNAc...) asparagine" evidence="4">
    <location>
        <position position="444"/>
    </location>
</feature>
<feature type="glycosylation site" description="N-linked (GlcNAc...) asparagine" evidence="4">
    <location>
        <position position="480"/>
    </location>
</feature>
<feature type="glycosylation site" description="N-linked (GlcNAc...) asparagine" evidence="4">
    <location>
        <position position="501"/>
    </location>
</feature>
<feature type="disulfide bond" description="Interchain" evidence="1">
    <location>
        <position position="137"/>
    </location>
</feature>
<feature type="sequence conflict" description="In Ref. 2; AAA48827 and 3; CAA28629." evidence="7" ref="2 3">
    <original>D</original>
    <variation>E</variation>
    <location>
        <position position="206"/>
    </location>
</feature>
<feature type="sequence conflict" description="In Ref. 2; AAA48827." evidence="7" ref="2">
    <original>V</original>
    <variation>L</variation>
    <location>
        <position position="267"/>
    </location>
</feature>
<feature type="sequence conflict" description="In Ref. 2; AAA48827." evidence="7" ref="2">
    <original>E</original>
    <variation>Q</variation>
    <location>
        <position position="303"/>
    </location>
</feature>
<feature type="sequence conflict" description="In Ref. 2; AAA48827 and 3; CAA28629." evidence="7" ref="2 3">
    <original>N</original>
    <variation>D</variation>
    <location>
        <position position="307"/>
    </location>
</feature>
<feature type="sequence conflict" description="In Ref. 2; AAA48827." evidence="7" ref="2">
    <original>E</original>
    <variation>H</variation>
    <location>
        <position position="317"/>
    </location>
</feature>
<feature type="sequence conflict" description="In Ref. 2; AAA48827." evidence="7" ref="2">
    <original>G</original>
    <variation>A</variation>
    <location>
        <position position="378"/>
    </location>
</feature>
<feature type="sequence conflict" description="In Ref. 2; AAA48827." evidence="7" ref="2">
    <original>EG</original>
    <variation>DR</variation>
    <location>
        <begin position="593"/>
        <end position="594"/>
    </location>
</feature>
<feature type="sequence conflict" description="In Ref. 2; AAA48827." evidence="7" ref="2">
    <original>W</original>
    <variation>C</variation>
    <location>
        <position position="653"/>
    </location>
</feature>
<feature type="sequence conflict" description="In Ref. 3; CAA28629." evidence="7" ref="3">
    <original>GKDISTN</original>
    <variation>VFSS</variation>
    <location>
        <begin position="669"/>
        <end position="675"/>
    </location>
</feature>
<name>ENPL_CHICK</name>
<evidence type="ECO:0000250" key="1">
    <source>
        <dbReference type="UniProtKB" id="P08113"/>
    </source>
</evidence>
<evidence type="ECO:0000250" key="2">
    <source>
        <dbReference type="UniProtKB" id="P14625"/>
    </source>
</evidence>
<evidence type="ECO:0000250" key="3">
    <source>
        <dbReference type="UniProtKB" id="P41148"/>
    </source>
</evidence>
<evidence type="ECO:0000255" key="4"/>
<evidence type="ECO:0000256" key="5">
    <source>
        <dbReference type="SAM" id="MobiDB-lite"/>
    </source>
</evidence>
<evidence type="ECO:0000269" key="6">
    <source>
    </source>
</evidence>
<evidence type="ECO:0000305" key="7"/>
<keyword id="KW-0067">ATP-binding</keyword>
<keyword id="KW-0106">Calcium</keyword>
<keyword id="KW-0143">Chaperone</keyword>
<keyword id="KW-0903">Direct protein sequencing</keyword>
<keyword id="KW-1015">Disulfide bond</keyword>
<keyword id="KW-0256">Endoplasmic reticulum</keyword>
<keyword id="KW-0325">Glycoprotein</keyword>
<keyword id="KW-0378">Hydrolase</keyword>
<keyword id="KW-0547">Nucleotide-binding</keyword>
<keyword id="KW-1185">Reference proteome</keyword>
<keyword id="KW-0703">Sarcoplasmic reticulum</keyword>
<keyword id="KW-0732">Signal</keyword>
<keyword id="KW-0346">Stress response</keyword>
<sequence>MKSAWALALACTLLLAASVTAEEVDVDATVEEDLGKSREGSRTDDEVVQREEEAIQLDGLNASQIKEIREKSEKFAFQAEVNRMMKLIINSLYKNKEIFLRELISNASDALDKIRLISLTDENALAGNEELTVKIKCDKEKNMLHVTDTGIGMTKEELIKNLGTIAKSGTSEFLNKMTEMQDDSQSTSELIGQFGVGFYSAFLVADRVIVTSKHNNDTQHIWESDSNEFSVIDDPRGNTLGRGTTITLVLKEEASDYLELDTVKNLVKKYSQFINFPIYVWSSKTETVEEPVEEEEAKEEKEETDDNEAAVEEEEEEKKPKTKKVEKTVWDWELMNDIKPIWQRPSKEVEEDEYKAFYKTFSKEHDDPMAYIHFTAEGEVTFKSILFVPNSAPRGLFDEYGSKKSDFIKLYVRRVFITDDFHDMMPKYLNFVKGVVDSDDLPLNVSRETLQQHKLLKVIRKKLVRKTLDMIKKIAEEKYNDTFWKEFGTNVKLGVIEDHSNRTRLAKLLRFQSSHHESNLTSLDQYVERMKEKQDKIYFMAGASRKEAESSPFVERLLKKGYEVIYLTEPVDEYCIQALPEFDGKRFQNVAKEGVKFEESEKSKESREALEKEFEPLLNWMKDKALKDKIEKAVLSQRLTQSPCALVASQYGWSGNMERIMKAQAYQTGKDISTNYYASQKKTFEINPRHPLIKDMLRRVKENEDDKTVSDLAVVLFETATLRSGYMLPDTKEYGDRIERMLRLSLNIDLDAKVEEEPEEPEDAAEEAEQDEEEVDADAEDSETQKESTDVKDEL</sequence>
<dbReference type="EC" id="3.6.4.-" evidence="3"/>
<dbReference type="EMBL" id="M14772">
    <property type="protein sequence ID" value="AAA48826.1"/>
    <property type="molecule type" value="mRNA"/>
</dbReference>
<dbReference type="EMBL" id="M31321">
    <property type="protein sequence ID" value="AAA48827.1"/>
    <property type="molecule type" value="Genomic_DNA"/>
</dbReference>
<dbReference type="EMBL" id="X04961">
    <property type="protein sequence ID" value="CAA28629.1"/>
    <property type="molecule type" value="Genomic_DNA"/>
</dbReference>
<dbReference type="PIR" id="A24461">
    <property type="entry name" value="HHCH08"/>
</dbReference>
<dbReference type="PIR" id="I50255">
    <property type="entry name" value="I50255"/>
</dbReference>
<dbReference type="RefSeq" id="NP_989620.1">
    <property type="nucleotide sequence ID" value="NM_204289.1"/>
</dbReference>
<dbReference type="SMR" id="P08110"/>
<dbReference type="BioGRID" id="675192">
    <property type="interactions" value="2"/>
</dbReference>
<dbReference type="FunCoup" id="P08110">
    <property type="interactions" value="2107"/>
</dbReference>
<dbReference type="IntAct" id="P08110">
    <property type="interactions" value="1"/>
</dbReference>
<dbReference type="STRING" id="9031.ENSGALP00000054843"/>
<dbReference type="GlyCosmos" id="P08110">
    <property type="glycosylation" value="6 sites, No reported glycans"/>
</dbReference>
<dbReference type="GlyGen" id="P08110">
    <property type="glycosylation" value="6 sites"/>
</dbReference>
<dbReference type="iPTMnet" id="P08110"/>
<dbReference type="PaxDb" id="9031-ENSGALP00000020744"/>
<dbReference type="GeneID" id="374163"/>
<dbReference type="KEGG" id="gga:374163"/>
<dbReference type="CTD" id="7184"/>
<dbReference type="VEuPathDB" id="HostDB:geneid_374163"/>
<dbReference type="eggNOG" id="KOG0020">
    <property type="taxonomic scope" value="Eukaryota"/>
</dbReference>
<dbReference type="InParanoid" id="P08110"/>
<dbReference type="OrthoDB" id="5426351at2759"/>
<dbReference type="PhylomeDB" id="P08110"/>
<dbReference type="PRO" id="PR:P08110"/>
<dbReference type="Proteomes" id="UP000000539">
    <property type="component" value="Unassembled WGS sequence"/>
</dbReference>
<dbReference type="GO" id="GO:0005783">
    <property type="term" value="C:endoplasmic reticulum"/>
    <property type="evidence" value="ECO:0000250"/>
    <property type="project" value="AgBase"/>
</dbReference>
<dbReference type="GO" id="GO:0048471">
    <property type="term" value="C:perinuclear region of cytoplasm"/>
    <property type="evidence" value="ECO:0000314"/>
    <property type="project" value="AgBase"/>
</dbReference>
<dbReference type="GO" id="GO:0033018">
    <property type="term" value="C:sarcoplasmic reticulum lumen"/>
    <property type="evidence" value="ECO:0007669"/>
    <property type="project" value="UniProtKB-SubCell"/>
</dbReference>
<dbReference type="GO" id="GO:0005524">
    <property type="term" value="F:ATP binding"/>
    <property type="evidence" value="ECO:0000318"/>
    <property type="project" value="GO_Central"/>
</dbReference>
<dbReference type="GO" id="GO:0016887">
    <property type="term" value="F:ATP hydrolysis activity"/>
    <property type="evidence" value="ECO:0000318"/>
    <property type="project" value="GO_Central"/>
</dbReference>
<dbReference type="GO" id="GO:0140662">
    <property type="term" value="F:ATP-dependent protein folding chaperone"/>
    <property type="evidence" value="ECO:0007669"/>
    <property type="project" value="InterPro"/>
</dbReference>
<dbReference type="GO" id="GO:0051082">
    <property type="term" value="F:unfolded protein binding"/>
    <property type="evidence" value="ECO:0000318"/>
    <property type="project" value="GO_Central"/>
</dbReference>
<dbReference type="GO" id="GO:0036503">
    <property type="term" value="P:ERAD pathway"/>
    <property type="evidence" value="ECO:0000318"/>
    <property type="project" value="GO_Central"/>
</dbReference>
<dbReference type="GO" id="GO:0006879">
    <property type="term" value="P:intracellular iron ion homeostasis"/>
    <property type="evidence" value="ECO:0000304"/>
    <property type="project" value="AgBase"/>
</dbReference>
<dbReference type="GO" id="GO:0006457">
    <property type="term" value="P:protein folding"/>
    <property type="evidence" value="ECO:0000318"/>
    <property type="project" value="GO_Central"/>
</dbReference>
<dbReference type="CDD" id="cd16927">
    <property type="entry name" value="HATPase_Hsp90-like"/>
    <property type="match status" value="1"/>
</dbReference>
<dbReference type="FunFam" id="3.30.230.80:FF:000003">
    <property type="entry name" value="endoplasmin isoform X1"/>
    <property type="match status" value="1"/>
</dbReference>
<dbReference type="FunFam" id="1.20.120.790:FF:000003">
    <property type="entry name" value="Heat shock protein 90"/>
    <property type="match status" value="1"/>
</dbReference>
<dbReference type="FunFam" id="3.30.565.10:FF:000005">
    <property type="entry name" value="Heat shock protein 90"/>
    <property type="match status" value="1"/>
</dbReference>
<dbReference type="FunFam" id="3.40.50.11260:FF:000003">
    <property type="entry name" value="Heat shock protein 90"/>
    <property type="match status" value="1"/>
</dbReference>
<dbReference type="Gene3D" id="3.30.230.80">
    <property type="match status" value="1"/>
</dbReference>
<dbReference type="Gene3D" id="3.40.50.11260">
    <property type="match status" value="1"/>
</dbReference>
<dbReference type="Gene3D" id="1.20.120.790">
    <property type="entry name" value="Heat shock protein 90, C-terminal domain"/>
    <property type="match status" value="1"/>
</dbReference>
<dbReference type="Gene3D" id="3.30.565.10">
    <property type="entry name" value="Histidine kinase-like ATPase, C-terminal domain"/>
    <property type="match status" value="1"/>
</dbReference>
<dbReference type="HAMAP" id="MF_00505">
    <property type="entry name" value="HSP90"/>
    <property type="match status" value="1"/>
</dbReference>
<dbReference type="InterPro" id="IPR036890">
    <property type="entry name" value="HATPase_C_sf"/>
</dbReference>
<dbReference type="InterPro" id="IPR019805">
    <property type="entry name" value="Heat_shock_protein_90_CS"/>
</dbReference>
<dbReference type="InterPro" id="IPR037196">
    <property type="entry name" value="HSP90_C"/>
</dbReference>
<dbReference type="InterPro" id="IPR001404">
    <property type="entry name" value="Hsp90_fam"/>
</dbReference>
<dbReference type="InterPro" id="IPR020575">
    <property type="entry name" value="Hsp90_N"/>
</dbReference>
<dbReference type="InterPro" id="IPR020568">
    <property type="entry name" value="Ribosomal_Su5_D2-typ_SF"/>
</dbReference>
<dbReference type="NCBIfam" id="NF003555">
    <property type="entry name" value="PRK05218.1"/>
    <property type="match status" value="1"/>
</dbReference>
<dbReference type="PANTHER" id="PTHR11528">
    <property type="entry name" value="HEAT SHOCK PROTEIN 90 FAMILY MEMBER"/>
    <property type="match status" value="1"/>
</dbReference>
<dbReference type="Pfam" id="PF13589">
    <property type="entry name" value="HATPase_c_3"/>
    <property type="match status" value="1"/>
</dbReference>
<dbReference type="Pfam" id="PF00183">
    <property type="entry name" value="HSP90"/>
    <property type="match status" value="1"/>
</dbReference>
<dbReference type="PIRSF" id="PIRSF002583">
    <property type="entry name" value="Hsp90"/>
    <property type="match status" value="1"/>
</dbReference>
<dbReference type="PRINTS" id="PR00775">
    <property type="entry name" value="HEATSHOCK90"/>
</dbReference>
<dbReference type="SMART" id="SM00387">
    <property type="entry name" value="HATPase_c"/>
    <property type="match status" value="1"/>
</dbReference>
<dbReference type="SUPFAM" id="SSF55874">
    <property type="entry name" value="ATPase domain of HSP90 chaperone/DNA topoisomerase II/histidine kinase"/>
    <property type="match status" value="1"/>
</dbReference>
<dbReference type="SUPFAM" id="SSF110942">
    <property type="entry name" value="HSP90 C-terminal domain"/>
    <property type="match status" value="1"/>
</dbReference>
<dbReference type="SUPFAM" id="SSF54211">
    <property type="entry name" value="Ribosomal protein S5 domain 2-like"/>
    <property type="match status" value="1"/>
</dbReference>
<dbReference type="PROSITE" id="PS00014">
    <property type="entry name" value="ER_TARGET"/>
    <property type="match status" value="1"/>
</dbReference>
<dbReference type="PROSITE" id="PS00298">
    <property type="entry name" value="HSP90"/>
    <property type="match status" value="1"/>
</dbReference>
<gene>
    <name type="primary">HSP90B1</name>
    <name evidence="2" type="synonym">HSPC4</name>
    <name type="synonym">TRA1</name>
</gene>
<comment type="function">
    <text evidence="2">ATP-dependent chaperone involved in the processing of proteins in the endoplasmic reticulum, regulating their transport.</text>
</comment>
<comment type="catalytic activity">
    <reaction evidence="3">
        <text>ATP + H2O = ADP + phosphate + H(+)</text>
        <dbReference type="Rhea" id="RHEA:13065"/>
        <dbReference type="ChEBI" id="CHEBI:15377"/>
        <dbReference type="ChEBI" id="CHEBI:15378"/>
        <dbReference type="ChEBI" id="CHEBI:30616"/>
        <dbReference type="ChEBI" id="CHEBI:43474"/>
        <dbReference type="ChEBI" id="CHEBI:456216"/>
    </reaction>
    <physiologicalReaction direction="left-to-right" evidence="3">
        <dbReference type="Rhea" id="RHEA:13066"/>
    </physiologicalReaction>
</comment>
<comment type="subunit">
    <text evidence="1">Homodimer; disulfide-linked.</text>
</comment>
<comment type="subcellular location">
    <subcellularLocation>
        <location evidence="2">Endoplasmic reticulum lumen</location>
    </subcellularLocation>
    <subcellularLocation>
        <location evidence="3">Sarcoplasmic reticulum lumen</location>
    </subcellularLocation>
</comment>
<comment type="similarity">
    <text evidence="7">Belongs to the heat shock protein 90 family.</text>
</comment>
<reference key="1">
    <citation type="journal article" date="1986" name="Biochemistry">
        <title>Amino acid sequence of a chicken heat shock protein derived from the complementary DNA nucleotide sequence.</title>
        <authorList>
            <person name="Kulomaa M.S."/>
            <person name="Weigel N.L."/>
            <person name="Kleinsek D.A."/>
            <person name="Beattie W.G."/>
            <person name="Conneely O.M."/>
            <person name="March C."/>
            <person name="Zarucki-Schulz T."/>
            <person name="Schrader W.T."/>
            <person name="O'Malley B.W."/>
        </authorList>
    </citation>
    <scope>NUCLEOTIDE SEQUENCE [MRNA]</scope>
</reference>
<reference key="2">
    <citation type="journal article" date="1986" name="Nucleic Acids Res.">
        <title>Molecular cloning of a steroid-regulated 108K heat shock protein gene from hen oviduct.</title>
        <authorList>
            <person name="Kleinsek D.A."/>
            <person name="Beattie W.G."/>
            <person name="Tsai M.J."/>
            <person name="O'Malley B.W."/>
        </authorList>
    </citation>
    <scope>NUCLEOTIDE SEQUENCE [GENOMIC DNA]</scope>
    <source>
        <tissue>Oviduct</tissue>
    </source>
</reference>
<reference key="3">
    <citation type="submission" date="1987-09" db="EMBL/GenBank/DDBJ databases">
        <authorList>
            <person name="Forsgren M."/>
        </authorList>
    </citation>
    <scope>NUCLEOTIDE SEQUENCE [GENOMIC DNA]</scope>
    <source>
        <tissue>Oviduct</tissue>
    </source>
</reference>
<reference key="4">
    <citation type="journal article" date="1994" name="Biochem. Biophys. Res. Commun.">
        <title>A chicken transferrin binding protein is heat shock protein 108.</title>
        <authorList>
            <person name="Hayes G.R."/>
            <person name="Himpler B.S."/>
            <person name="Weiner K.X.B."/>
            <person name="Lucas J.J."/>
        </authorList>
    </citation>
    <scope>NUCLEOTIDE SEQUENCE [MRNA]</scope>
    <scope>PARTIAL PROTEIN SEQUENCE</scope>
    <scope>GLYCOSYLATION AT ASN-216</scope>
</reference>